<sequence>MAHTMRVDVVSAEEEIFSGEAEFVALPGESGELGILPGHTPLITRIRPGAVRIKVTGQAEDEFVFVAGGILEVQPHVVTVLADTAIRGGDLDEAKAAEAKQLAEEALVNKESKIDYAQAQAELASAIAQLAAIQRLRQKR</sequence>
<keyword id="KW-0066">ATP synthesis</keyword>
<keyword id="KW-0997">Cell inner membrane</keyword>
<keyword id="KW-1003">Cell membrane</keyword>
<keyword id="KW-0139">CF(1)</keyword>
<keyword id="KW-0375">Hydrogen ion transport</keyword>
<keyword id="KW-0406">Ion transport</keyword>
<keyword id="KW-0472">Membrane</keyword>
<keyword id="KW-0813">Transport</keyword>
<comment type="function">
    <text evidence="1">Produces ATP from ADP in the presence of a proton gradient across the membrane.</text>
</comment>
<comment type="subunit">
    <text evidence="1">F-type ATPases have 2 components, CF(1) - the catalytic core - and CF(0) - the membrane proton channel. CF(1) has five subunits: alpha(3), beta(3), gamma(1), delta(1), epsilon(1). CF(0) has three main subunits: a, b and c.</text>
</comment>
<comment type="subcellular location">
    <subcellularLocation>
        <location evidence="1">Cell inner membrane</location>
        <topology evidence="1">Peripheral membrane protein</topology>
    </subcellularLocation>
</comment>
<comment type="similarity">
    <text evidence="1">Belongs to the ATPase epsilon chain family.</text>
</comment>
<accession>A6T469</accession>
<reference key="1">
    <citation type="journal article" date="2007" name="PLoS Genet.">
        <title>Genome analysis of Minibacterium massiliensis highlights the convergent evolution of water-living bacteria.</title>
        <authorList>
            <person name="Audic S."/>
            <person name="Robert C."/>
            <person name="Campagna B."/>
            <person name="Parinello H."/>
            <person name="Claverie J.-M."/>
            <person name="Raoult D."/>
            <person name="Drancourt M."/>
        </authorList>
    </citation>
    <scope>NUCLEOTIDE SEQUENCE [LARGE SCALE GENOMIC DNA]</scope>
    <source>
        <strain>Marseille</strain>
    </source>
</reference>
<organism>
    <name type="scientific">Janthinobacterium sp. (strain Marseille)</name>
    <name type="common">Minibacterium massiliensis</name>
    <dbReference type="NCBI Taxonomy" id="375286"/>
    <lineage>
        <taxon>Bacteria</taxon>
        <taxon>Pseudomonadati</taxon>
        <taxon>Pseudomonadota</taxon>
        <taxon>Betaproteobacteria</taxon>
        <taxon>Burkholderiales</taxon>
        <taxon>Oxalobacteraceae</taxon>
        <taxon>Janthinobacterium</taxon>
    </lineage>
</organism>
<gene>
    <name evidence="1" type="primary">atpC</name>
    <name type="ordered locus">mma_3626</name>
</gene>
<feature type="chain" id="PRO_1000056491" description="ATP synthase epsilon chain">
    <location>
        <begin position="1"/>
        <end position="140"/>
    </location>
</feature>
<dbReference type="EMBL" id="CP000269">
    <property type="protein sequence ID" value="ABR89149.1"/>
    <property type="molecule type" value="Genomic_DNA"/>
</dbReference>
<dbReference type="RefSeq" id="WP_012081462.1">
    <property type="nucleotide sequence ID" value="NC_009659.1"/>
</dbReference>
<dbReference type="SMR" id="A6T469"/>
<dbReference type="STRING" id="375286.mma_3626"/>
<dbReference type="KEGG" id="mms:mma_3626"/>
<dbReference type="eggNOG" id="COG0355">
    <property type="taxonomic scope" value="Bacteria"/>
</dbReference>
<dbReference type="HOGENOM" id="CLU_084338_2_0_4"/>
<dbReference type="OrthoDB" id="9791445at2"/>
<dbReference type="Proteomes" id="UP000006388">
    <property type="component" value="Chromosome"/>
</dbReference>
<dbReference type="GO" id="GO:0005886">
    <property type="term" value="C:plasma membrane"/>
    <property type="evidence" value="ECO:0007669"/>
    <property type="project" value="UniProtKB-SubCell"/>
</dbReference>
<dbReference type="GO" id="GO:0045259">
    <property type="term" value="C:proton-transporting ATP synthase complex"/>
    <property type="evidence" value="ECO:0007669"/>
    <property type="project" value="UniProtKB-KW"/>
</dbReference>
<dbReference type="GO" id="GO:0005524">
    <property type="term" value="F:ATP binding"/>
    <property type="evidence" value="ECO:0007669"/>
    <property type="project" value="UniProtKB-UniRule"/>
</dbReference>
<dbReference type="GO" id="GO:0046933">
    <property type="term" value="F:proton-transporting ATP synthase activity, rotational mechanism"/>
    <property type="evidence" value="ECO:0007669"/>
    <property type="project" value="UniProtKB-UniRule"/>
</dbReference>
<dbReference type="CDD" id="cd12152">
    <property type="entry name" value="F1-ATPase_delta"/>
    <property type="match status" value="1"/>
</dbReference>
<dbReference type="FunFam" id="2.60.15.10:FF:000001">
    <property type="entry name" value="ATP synthase epsilon chain"/>
    <property type="match status" value="1"/>
</dbReference>
<dbReference type="Gene3D" id="1.20.5.440">
    <property type="entry name" value="ATP synthase delta/epsilon subunit, C-terminal domain"/>
    <property type="match status" value="1"/>
</dbReference>
<dbReference type="Gene3D" id="2.60.15.10">
    <property type="entry name" value="F0F1 ATP synthase delta/epsilon subunit, N-terminal"/>
    <property type="match status" value="1"/>
</dbReference>
<dbReference type="HAMAP" id="MF_00530">
    <property type="entry name" value="ATP_synth_epsil_bac"/>
    <property type="match status" value="1"/>
</dbReference>
<dbReference type="InterPro" id="IPR036794">
    <property type="entry name" value="ATP_F1_dsu/esu_C_sf"/>
</dbReference>
<dbReference type="InterPro" id="IPR001469">
    <property type="entry name" value="ATP_synth_F1_dsu/esu"/>
</dbReference>
<dbReference type="InterPro" id="IPR020546">
    <property type="entry name" value="ATP_synth_F1_dsu/esu_N"/>
</dbReference>
<dbReference type="InterPro" id="IPR020547">
    <property type="entry name" value="ATP_synth_F1_esu_C"/>
</dbReference>
<dbReference type="InterPro" id="IPR036771">
    <property type="entry name" value="ATPsynth_dsu/esu_N"/>
</dbReference>
<dbReference type="NCBIfam" id="TIGR01216">
    <property type="entry name" value="ATP_synt_epsi"/>
    <property type="match status" value="1"/>
</dbReference>
<dbReference type="NCBIfam" id="NF001847">
    <property type="entry name" value="PRK00571.1-4"/>
    <property type="match status" value="1"/>
</dbReference>
<dbReference type="PANTHER" id="PTHR13822">
    <property type="entry name" value="ATP SYNTHASE DELTA/EPSILON CHAIN"/>
    <property type="match status" value="1"/>
</dbReference>
<dbReference type="PANTHER" id="PTHR13822:SF10">
    <property type="entry name" value="ATP SYNTHASE EPSILON CHAIN, CHLOROPLASTIC"/>
    <property type="match status" value="1"/>
</dbReference>
<dbReference type="Pfam" id="PF00401">
    <property type="entry name" value="ATP-synt_DE"/>
    <property type="match status" value="1"/>
</dbReference>
<dbReference type="Pfam" id="PF02823">
    <property type="entry name" value="ATP-synt_DE_N"/>
    <property type="match status" value="1"/>
</dbReference>
<dbReference type="SUPFAM" id="SSF46604">
    <property type="entry name" value="Epsilon subunit of F1F0-ATP synthase C-terminal domain"/>
    <property type="match status" value="1"/>
</dbReference>
<dbReference type="SUPFAM" id="SSF51344">
    <property type="entry name" value="Epsilon subunit of F1F0-ATP synthase N-terminal domain"/>
    <property type="match status" value="1"/>
</dbReference>
<name>ATPE_JANMA</name>
<evidence type="ECO:0000255" key="1">
    <source>
        <dbReference type="HAMAP-Rule" id="MF_00530"/>
    </source>
</evidence>
<proteinExistence type="inferred from homology"/>
<protein>
    <recommendedName>
        <fullName evidence="1">ATP synthase epsilon chain</fullName>
    </recommendedName>
    <alternativeName>
        <fullName evidence="1">ATP synthase F1 sector epsilon subunit</fullName>
    </alternativeName>
    <alternativeName>
        <fullName evidence="1">F-ATPase epsilon subunit</fullName>
    </alternativeName>
</protein>